<accession>Q09627</accession>
<reference key="1">
    <citation type="journal article" date="1998" name="Science">
        <title>Genome sequence of the nematode C. elegans: a platform for investigating biology.</title>
        <authorList>
            <consortium name="The C. elegans sequencing consortium"/>
        </authorList>
    </citation>
    <scope>NUCLEOTIDE SEQUENCE [LARGE SCALE GENOMIC DNA]</scope>
    <source>
        <strain>Bristol N2</strain>
    </source>
</reference>
<reference key="2">
    <citation type="journal article" date="1998" name="Genome Res.">
        <title>New insulin-like proteins with atypical disulfide bond pattern characterized in Caenorhabditis elegans by comparative sequence analysis and homology modeling.</title>
        <authorList>
            <person name="Duret L."/>
            <person name="Guex N."/>
            <person name="Peitsch M.C."/>
            <person name="Bairoch A."/>
        </authorList>
    </citation>
    <scope>SIMILARITY TO INSULIN</scope>
</reference>
<evidence type="ECO:0000255" key="1"/>
<evidence type="ECO:0000305" key="2"/>
<organism>
    <name type="scientific">Caenorhabditis elegans</name>
    <dbReference type="NCBI Taxonomy" id="6239"/>
    <lineage>
        <taxon>Eukaryota</taxon>
        <taxon>Metazoa</taxon>
        <taxon>Ecdysozoa</taxon>
        <taxon>Nematoda</taxon>
        <taxon>Chromadorea</taxon>
        <taxon>Rhabditida</taxon>
        <taxon>Rhabditina</taxon>
        <taxon>Rhabditomorpha</taxon>
        <taxon>Rhabditoidea</taxon>
        <taxon>Rhabditidae</taxon>
        <taxon>Peloderinae</taxon>
        <taxon>Caenorhabditis</taxon>
    </lineage>
</organism>
<dbReference type="EMBL" id="FO080104">
    <property type="protein sequence ID" value="CCD61235.1"/>
    <property type="molecule type" value="Genomic_DNA"/>
</dbReference>
<dbReference type="PIR" id="T27987">
    <property type="entry name" value="T27987"/>
</dbReference>
<dbReference type="RefSeq" id="NP_495194.1">
    <property type="nucleotide sequence ID" value="NM_062793.2"/>
</dbReference>
<dbReference type="SMR" id="Q09627"/>
<dbReference type="FunCoup" id="Q09627">
    <property type="interactions" value="1570"/>
</dbReference>
<dbReference type="STRING" id="6239.ZK75.2.1"/>
<dbReference type="PaxDb" id="6239-ZK75.2"/>
<dbReference type="PeptideAtlas" id="Q09627"/>
<dbReference type="EnsemblMetazoa" id="ZK75.2.1">
    <property type="protein sequence ID" value="ZK75.2.1"/>
    <property type="gene ID" value="WBGene00002085"/>
</dbReference>
<dbReference type="GeneID" id="191217"/>
<dbReference type="KEGG" id="cel:CELE_ZK75.2"/>
<dbReference type="UCSC" id="ZK75.2">
    <property type="organism name" value="c. elegans"/>
</dbReference>
<dbReference type="AGR" id="WB:WBGene00002085"/>
<dbReference type="CTD" id="191217"/>
<dbReference type="WormBase" id="ZK75.2">
    <property type="protein sequence ID" value="CE02101"/>
    <property type="gene ID" value="WBGene00002085"/>
    <property type="gene designation" value="ins-2"/>
</dbReference>
<dbReference type="eggNOG" id="ENOG502TIEQ">
    <property type="taxonomic scope" value="Eukaryota"/>
</dbReference>
<dbReference type="HOGENOM" id="CLU_154797_1_0_1"/>
<dbReference type="InParanoid" id="Q09627"/>
<dbReference type="OMA" id="SHICCIK"/>
<dbReference type="OrthoDB" id="5777251at2759"/>
<dbReference type="PhylomeDB" id="Q09627"/>
<dbReference type="PRO" id="PR:Q09627"/>
<dbReference type="Proteomes" id="UP000001940">
    <property type="component" value="Chromosome II"/>
</dbReference>
<dbReference type="Bgee" id="WBGene00002085">
    <property type="expression patterns" value="Expressed in pharyngeal muscle cell (C elegans) and 3 other cell types or tissues"/>
</dbReference>
<dbReference type="GO" id="GO:0005576">
    <property type="term" value="C:extracellular region"/>
    <property type="evidence" value="ECO:0007669"/>
    <property type="project" value="UniProtKB-SubCell"/>
</dbReference>
<dbReference type="GO" id="GO:0005179">
    <property type="term" value="F:hormone activity"/>
    <property type="evidence" value="ECO:0007669"/>
    <property type="project" value="InterPro"/>
</dbReference>
<dbReference type="GO" id="GO:1905910">
    <property type="term" value="P:negative regulation of dauer entry"/>
    <property type="evidence" value="ECO:0000316"/>
    <property type="project" value="UniProtKB"/>
</dbReference>
<dbReference type="Gene3D" id="1.10.100.10">
    <property type="entry name" value="Insulin-like"/>
    <property type="match status" value="1"/>
</dbReference>
<dbReference type="InterPro" id="IPR052335">
    <property type="entry name" value="Insulin-like_regulatory"/>
</dbReference>
<dbReference type="InterPro" id="IPR036438">
    <property type="entry name" value="Insulin-like_sf"/>
</dbReference>
<dbReference type="InterPro" id="IPR022353">
    <property type="entry name" value="Insulin_CS"/>
</dbReference>
<dbReference type="InterPro" id="IPR003235">
    <property type="entry name" value="Nem_insulin-like_b-type"/>
</dbReference>
<dbReference type="PANTHER" id="PTHR33893">
    <property type="entry name" value="INSULIN RELATED-RELATED-RELATED"/>
    <property type="match status" value="1"/>
</dbReference>
<dbReference type="PANTHER" id="PTHR33893:SF11">
    <property type="entry name" value="INSULIN-LIKE PEPTIDE BETA-TYPE 2-RELATED"/>
    <property type="match status" value="1"/>
</dbReference>
<dbReference type="Pfam" id="PF03488">
    <property type="entry name" value="Ins_beta"/>
    <property type="match status" value="1"/>
</dbReference>
<dbReference type="SUPFAM" id="SSF56994">
    <property type="entry name" value="Insulin-like"/>
    <property type="match status" value="1"/>
</dbReference>
<dbReference type="PROSITE" id="PS00262">
    <property type="entry name" value="INSULIN"/>
    <property type="match status" value="1"/>
</dbReference>
<keyword id="KW-0165">Cleavage on pair of basic residues</keyword>
<keyword id="KW-1015">Disulfide bond</keyword>
<keyword id="KW-1185">Reference proteome</keyword>
<keyword id="KW-0964">Secreted</keyword>
<keyword id="KW-0732">Signal</keyword>
<protein>
    <recommendedName>
        <fullName>Probable insulin-like peptide beta-type 2</fullName>
    </recommendedName>
</protein>
<comment type="subcellular location">
    <subcellularLocation>
        <location evidence="2">Secreted</location>
    </subcellularLocation>
</comment>
<comment type="similarity">
    <text evidence="2">Belongs to the insulin family.</text>
</comment>
<gene>
    <name type="primary">ins-2</name>
    <name type="ORF">ZK75.2</name>
</gene>
<name>ILB2_CAEEL</name>
<feature type="signal peptide" evidence="1">
    <location>
        <begin position="1"/>
        <end position="15"/>
    </location>
</feature>
<feature type="propeptide" id="PRO_0000016218" evidence="1">
    <location>
        <begin position="16"/>
        <end position="56"/>
    </location>
</feature>
<feature type="chain" id="PRO_0000016219" description="Probable insulin-like peptide beta-type 2">
    <location>
        <begin position="57"/>
        <end position="106"/>
    </location>
</feature>
<feature type="disulfide bond" evidence="1">
    <location>
        <begin position="58"/>
        <end position="86"/>
    </location>
</feature>
<feature type="disulfide bond" evidence="1">
    <location>
        <begin position="70"/>
        <end position="99"/>
    </location>
</feature>
<feature type="disulfide bond" evidence="1">
    <location>
        <begin position="73"/>
        <end position="100"/>
    </location>
</feature>
<feature type="disulfide bond" evidence="1">
    <location>
        <begin position="85"/>
        <end position="90"/>
    </location>
</feature>
<proteinExistence type="inferred from homology"/>
<sequence>MNAIIFCLLFTTVTATYEVFGKGIEHRNEHLIINQLDIIPVESTPTPNRASRVQKRLCGRRLILFMLATCGECDTDSSEDLSHICCIKQCDVQDIIRVCCPNSFRK</sequence>